<keyword id="KW-0150">Chloroplast</keyword>
<keyword id="KW-0249">Electron transport</keyword>
<keyword id="KW-0472">Membrane</keyword>
<keyword id="KW-0602">Photosynthesis</keyword>
<keyword id="KW-0934">Plastid</keyword>
<keyword id="KW-0793">Thylakoid</keyword>
<keyword id="KW-0812">Transmembrane</keyword>
<keyword id="KW-1133">Transmembrane helix</keyword>
<keyword id="KW-0813">Transport</keyword>
<protein>
    <recommendedName>
        <fullName evidence="1">Cytochrome b6-f complex subunit 6</fullName>
    </recommendedName>
    <alternativeName>
        <fullName evidence="1">Cytochrome b6-f complex subunit PetL</fullName>
    </alternativeName>
    <alternativeName>
        <fullName evidence="1">Cytochrome b6-f complex subunit VI</fullName>
    </alternativeName>
</protein>
<reference key="1">
    <citation type="journal article" date="2008" name="BMC Evol. Biol.">
        <title>The complete plastid genome sequence of Welwitschia mirabilis: an unusually compact plastome with accelerated divergence rates.</title>
        <authorList>
            <person name="McCoy S.R."/>
            <person name="Kuehl J.V."/>
            <person name="Boore J.L."/>
            <person name="Raubeson L.A."/>
        </authorList>
    </citation>
    <scope>NUCLEOTIDE SEQUENCE [LARGE SCALE GENOMIC DNA]</scope>
</reference>
<reference key="2">
    <citation type="journal article" date="2009" name="Mol. Phylogenet. Evol.">
        <title>Evolution of reduced and compact chloroplast genomes (cpDNAs) in gnetophytes: Selection toward a lower-cost strategy.</title>
        <authorList>
            <person name="Wu C.-S."/>
            <person name="Lai Y.-T."/>
            <person name="Lin C.-P."/>
            <person name="Wang Y.-N."/>
            <person name="Chaw S.-M."/>
        </authorList>
    </citation>
    <scope>NUCLEOTIDE SEQUENCE [LARGE SCALE GENOMIC DNA]</scope>
</reference>
<comment type="function">
    <text evidence="1">Component of the cytochrome b6-f complex, which mediates electron transfer between photosystem II (PSII) and photosystem I (PSI), cyclic electron flow around PSI, and state transitions. PetL is important for photoautotrophic growth as well as for electron transfer efficiency and stability of the cytochrome b6-f complex.</text>
</comment>
<comment type="subunit">
    <text evidence="1">The 4 large subunits of the cytochrome b6-f complex are cytochrome b6, subunit IV (17 kDa polypeptide, PetD), cytochrome f and the Rieske protein, while the 4 small subunits are PetG, PetL, PetM and PetN. The complex functions as a dimer.</text>
</comment>
<comment type="subcellular location">
    <subcellularLocation>
        <location evidence="1">Plastid</location>
        <location evidence="1">Chloroplast thylakoid membrane</location>
        <topology evidence="1">Single-pass membrane protein</topology>
    </subcellularLocation>
</comment>
<comment type="similarity">
    <text evidence="1">Belongs to the PetL family.</text>
</comment>
<organism>
    <name type="scientific">Welwitschia mirabilis</name>
    <name type="common">Tree tumbo</name>
    <name type="synonym">Welwitschia bainesii</name>
    <dbReference type="NCBI Taxonomy" id="3377"/>
    <lineage>
        <taxon>Eukaryota</taxon>
        <taxon>Viridiplantae</taxon>
        <taxon>Streptophyta</taxon>
        <taxon>Embryophyta</taxon>
        <taxon>Tracheophyta</taxon>
        <taxon>Spermatophyta</taxon>
        <taxon>Gnetopsida</taxon>
        <taxon>Gnetidae</taxon>
        <taxon>Welwitschiales</taxon>
        <taxon>Welwitschiaceae</taxon>
        <taxon>Welwitschia</taxon>
    </lineage>
</organism>
<geneLocation type="chloroplast"/>
<evidence type="ECO:0000255" key="1">
    <source>
        <dbReference type="HAMAP-Rule" id="MF_00433"/>
    </source>
</evidence>
<feature type="chain" id="PRO_1000134941" description="Cytochrome b6-f complex subunit 6">
    <location>
        <begin position="1"/>
        <end position="31"/>
    </location>
</feature>
<feature type="transmembrane region" description="Helical" evidence="1">
    <location>
        <begin position="3"/>
        <end position="23"/>
    </location>
</feature>
<dbReference type="EMBL" id="EU342371">
    <property type="protein sequence ID" value="ABY26807.1"/>
    <property type="molecule type" value="Genomic_DNA"/>
</dbReference>
<dbReference type="EMBL" id="AP009568">
    <property type="protein sequence ID" value="BAH11211.1"/>
    <property type="molecule type" value="Genomic_DNA"/>
</dbReference>
<dbReference type="RefSeq" id="YP_001876594.1">
    <property type="nucleotide sequence ID" value="NC_010654.1"/>
</dbReference>
<dbReference type="SMR" id="B2Y1X7"/>
<dbReference type="GeneID" id="6276250"/>
<dbReference type="GO" id="GO:0009535">
    <property type="term" value="C:chloroplast thylakoid membrane"/>
    <property type="evidence" value="ECO:0007669"/>
    <property type="project" value="UniProtKB-SubCell"/>
</dbReference>
<dbReference type="GO" id="GO:0009512">
    <property type="term" value="C:cytochrome b6f complex"/>
    <property type="evidence" value="ECO:0007669"/>
    <property type="project" value="InterPro"/>
</dbReference>
<dbReference type="GO" id="GO:0045158">
    <property type="term" value="F:electron transporter, transferring electrons within cytochrome b6/f complex of photosystem II activity"/>
    <property type="evidence" value="ECO:0007669"/>
    <property type="project" value="UniProtKB-UniRule"/>
</dbReference>
<dbReference type="GO" id="GO:0015979">
    <property type="term" value="P:photosynthesis"/>
    <property type="evidence" value="ECO:0007669"/>
    <property type="project" value="UniProtKB-KW"/>
</dbReference>
<dbReference type="HAMAP" id="MF_00433">
    <property type="entry name" value="Cytb6_f_PetL"/>
    <property type="match status" value="1"/>
</dbReference>
<dbReference type="InterPro" id="IPR007802">
    <property type="entry name" value="Cyt_b6/f_cplx_su6"/>
</dbReference>
<dbReference type="Pfam" id="PF05115">
    <property type="entry name" value="PetL"/>
    <property type="match status" value="1"/>
</dbReference>
<proteinExistence type="inferred from homology"/>
<sequence length="31" mass="3787">MVILISYFCFLLVFFLFTLILFIGFNRIRLI</sequence>
<accession>B2Y1X7</accession>
<name>PETL_WELMI</name>
<gene>
    <name evidence="1" type="primary">petL</name>
</gene>